<evidence type="ECO:0000255" key="1">
    <source>
        <dbReference type="HAMAP-Rule" id="MF_04071"/>
    </source>
</evidence>
<reference key="1">
    <citation type="journal article" date="1993" name="Virology">
        <title>Phylogenetic analysis of the N8 neuraminidase gene of influenza A viruses.</title>
        <authorList>
            <person name="Saito T."/>
            <person name="Kawaoka Y."/>
            <person name="Webster R.G."/>
        </authorList>
    </citation>
    <scope>NUCLEOTIDE SEQUENCE [GENOMIC RNA]</scope>
</reference>
<reference key="2">
    <citation type="journal article" date="2004" name="Virus Res.">
        <title>Assembly and budding of influenza virus.</title>
        <authorList>
            <person name="Nayak D.P."/>
            <person name="Hui E.K."/>
            <person name="Barman S."/>
        </authorList>
    </citation>
    <scope>REVIEW</scope>
</reference>
<reference key="3">
    <citation type="journal article" date="2005" name="N. Engl. J. Med.">
        <title>Neuraminidase inhibitors for influenza.</title>
        <authorList>
            <person name="Moscona A."/>
        </authorList>
    </citation>
    <scope>REVIEW</scope>
</reference>
<reference key="4">
    <citation type="journal article" date="2005" name="Biol. Pharm. Bull.">
        <title>Sialobiology of influenza: molecular mechanism of host range variation of influenza viruses.</title>
        <authorList>
            <person name="Suzuki Y."/>
        </authorList>
    </citation>
    <scope>REVIEW</scope>
</reference>
<proteinExistence type="inferred from homology"/>
<accession>Q07578</accession>
<comment type="function">
    <text evidence="1">Catalyzes the removal of terminal sialic acid residues from viral and cellular glycoconjugates. Cleaves off the terminal sialic acids on the glycosylated HA during virus budding to facilitate virus release. Additionally helps virus spread through the circulation by further removing sialic acids from the cell surface. These cleavages prevent self-aggregation and ensure the efficient spread of the progeny virus from cell to cell. Otherwise, infection would be limited to one round of replication. Described as a receptor-destroying enzyme because it cleaves a terminal sialic acid from the cellular receptors. May facilitate viral invasion of the upper airways by cleaving the sialic acid moieties on the mucin of the airway epithelial cells. Likely to plays a role in the budding process through its association with lipid rafts during intracellular transport. May additionally display a raft-association independent effect on budding. Plays a role in the determination of host range restriction on replication and virulence. Sialidase activity in late endosome/lysosome traffic seems to enhance virus replication.</text>
</comment>
<comment type="catalytic activity">
    <reaction evidence="1">
        <text>Hydrolysis of alpha-(2-&gt;3)-, alpha-(2-&gt;6)-, alpha-(2-&gt;8)- glycosidic linkages of terminal sialic acid residues in oligosaccharides, glycoproteins, glycolipids, colominic acid and synthetic substrates.</text>
        <dbReference type="EC" id="3.2.1.18"/>
    </reaction>
</comment>
<comment type="cofactor">
    <cofactor evidence="1">
        <name>Ca(2+)</name>
        <dbReference type="ChEBI" id="CHEBI:29108"/>
    </cofactor>
</comment>
<comment type="activity regulation">
    <text evidence="1">Inhibited by the neuraminidase inhibitors zanamivir (Relenza) and oseltamivir (Tamiflu). These drugs interfere with the release of progeny virus from infected cells and are effective against all influenza strains. Resistance to neuraminidase inhibitors is quite rare.</text>
</comment>
<comment type="subunit">
    <text evidence="1">Homotetramer.</text>
</comment>
<comment type="subcellular location">
    <subcellularLocation>
        <location evidence="1">Virion membrane</location>
    </subcellularLocation>
    <subcellularLocation>
        <location evidence="1">Host apical cell membrane</location>
        <topology evidence="1">Single-pass type II membrane protein</topology>
    </subcellularLocation>
    <text evidence="1">Preferentially accumulates at the apical plasma membrane in infected polarized epithelial cells, which is the virus assembly site. Uses lipid rafts for cell surface transport and apical sorting. In the virion, forms a mushroom-shaped spike on the surface of the membrane.</text>
</comment>
<comment type="domain">
    <text evidence="1">Intact N-terminus is essential for virion morphogenesis. Possesses two apical sorting signals, one in the ectodomain, which is likely to be a glycan, and the other in the transmembrane domain. The transmembrane domain also plays a role in lipid raft association.</text>
</comment>
<comment type="PTM">
    <text evidence="1">N-glycosylated.</text>
</comment>
<comment type="miscellaneous">
    <text>The influenza A genome consist of 8 RNA segments. Genetic variation of hemagglutinin and/or neuraminidase genes results in the emergence of new influenza strains. The mechanism of variation can be the result of point mutations or the result of genetic reassortment between segments of two different strains.</text>
</comment>
<comment type="similarity">
    <text evidence="1">Belongs to the glycosyl hydrolase 34 family.</text>
</comment>
<keyword id="KW-0106">Calcium</keyword>
<keyword id="KW-1015">Disulfide bond</keyword>
<keyword id="KW-0325">Glycoprotein</keyword>
<keyword id="KW-0326">Glycosidase</keyword>
<keyword id="KW-1032">Host cell membrane</keyword>
<keyword id="KW-1043">Host membrane</keyword>
<keyword id="KW-0378">Hydrolase</keyword>
<keyword id="KW-0472">Membrane</keyword>
<keyword id="KW-0479">Metal-binding</keyword>
<keyword id="KW-0735">Signal-anchor</keyword>
<keyword id="KW-0812">Transmembrane</keyword>
<keyword id="KW-1133">Transmembrane helix</keyword>
<keyword id="KW-0946">Virion</keyword>
<dbReference type="EC" id="3.2.1.18" evidence="1"/>
<dbReference type="EMBL" id="L06579">
    <property type="protein sequence ID" value="AAA43374.1"/>
    <property type="molecule type" value="Genomic_RNA"/>
</dbReference>
<dbReference type="SMR" id="Q07578"/>
<dbReference type="CAZy" id="GH34">
    <property type="family name" value="Glycoside Hydrolase Family 34"/>
</dbReference>
<dbReference type="GlyCosmos" id="Q07578">
    <property type="glycosylation" value="6 sites, No reported glycans"/>
</dbReference>
<dbReference type="Proteomes" id="UP000130281">
    <property type="component" value="Genome"/>
</dbReference>
<dbReference type="GO" id="GO:0020002">
    <property type="term" value="C:host cell plasma membrane"/>
    <property type="evidence" value="ECO:0007669"/>
    <property type="project" value="UniProtKB-SubCell"/>
</dbReference>
<dbReference type="GO" id="GO:0016020">
    <property type="term" value="C:membrane"/>
    <property type="evidence" value="ECO:0007669"/>
    <property type="project" value="UniProtKB-UniRule"/>
</dbReference>
<dbReference type="GO" id="GO:0055036">
    <property type="term" value="C:virion membrane"/>
    <property type="evidence" value="ECO:0007669"/>
    <property type="project" value="UniProtKB-SubCell"/>
</dbReference>
<dbReference type="GO" id="GO:0004308">
    <property type="term" value="F:exo-alpha-sialidase activity"/>
    <property type="evidence" value="ECO:0007669"/>
    <property type="project" value="UniProtKB-UniRule"/>
</dbReference>
<dbReference type="GO" id="GO:0046872">
    <property type="term" value="F:metal ion binding"/>
    <property type="evidence" value="ECO:0007669"/>
    <property type="project" value="UniProtKB-UniRule"/>
</dbReference>
<dbReference type="GO" id="GO:0005975">
    <property type="term" value="P:carbohydrate metabolic process"/>
    <property type="evidence" value="ECO:0007669"/>
    <property type="project" value="InterPro"/>
</dbReference>
<dbReference type="GO" id="GO:0046761">
    <property type="term" value="P:viral budding from plasma membrane"/>
    <property type="evidence" value="ECO:0007669"/>
    <property type="project" value="UniProtKB-UniRule"/>
</dbReference>
<dbReference type="Gene3D" id="2.120.10.10">
    <property type="match status" value="1"/>
</dbReference>
<dbReference type="HAMAP" id="MF_04071">
    <property type="entry name" value="INFV_NRAM"/>
    <property type="match status" value="1"/>
</dbReference>
<dbReference type="InterPro" id="IPR001860">
    <property type="entry name" value="Glyco_hydro_34"/>
</dbReference>
<dbReference type="InterPro" id="IPR036278">
    <property type="entry name" value="Sialidase_sf"/>
</dbReference>
<dbReference type="Pfam" id="PF00064">
    <property type="entry name" value="Neur"/>
    <property type="match status" value="1"/>
</dbReference>
<dbReference type="SUPFAM" id="SSF50939">
    <property type="entry name" value="Sialidases"/>
    <property type="match status" value="1"/>
</dbReference>
<organism>
    <name type="scientific">Influenza A virus (strain A/Equine/Jillin/1/1989 H3N8)</name>
    <dbReference type="NCBI Taxonomy" id="385585"/>
    <lineage>
        <taxon>Viruses</taxon>
        <taxon>Riboviria</taxon>
        <taxon>Orthornavirae</taxon>
        <taxon>Negarnaviricota</taxon>
        <taxon>Polyploviricotina</taxon>
        <taxon>Insthoviricetes</taxon>
        <taxon>Articulavirales</taxon>
        <taxon>Orthomyxoviridae</taxon>
        <taxon>Alphainfluenzavirus</taxon>
        <taxon>Alphainfluenzavirus influenzae</taxon>
        <taxon>Influenza A virus</taxon>
    </lineage>
</organism>
<gene>
    <name evidence="1" type="primary">NA</name>
</gene>
<organismHost>
    <name type="scientific">Aves</name>
    <dbReference type="NCBI Taxonomy" id="8782"/>
</organismHost>
<organismHost>
    <name type="scientific">Equus caballus</name>
    <name type="common">Horse</name>
    <dbReference type="NCBI Taxonomy" id="9796"/>
</organismHost>
<protein>
    <recommendedName>
        <fullName evidence="1">Neuraminidase</fullName>
        <ecNumber evidence="1">3.2.1.18</ecNumber>
    </recommendedName>
</protein>
<name>NRAM_I89A7</name>
<sequence>MNPNQKIITIGSISLGLVVFNVLLHVVSIIVTVLVLGRGGKNRICNETVVREYNETVRIEKVTQWHNTNVIEYVPYWNEGTYMNNTEAICDVKGFAPFSKDNGIRIGSRGHVFVIREPFVSCSPTECRTFFLTQGSLLNDKHSNGTVKDRSPFRTLMSVEVGQPPNVYQARFEAVAWSATACHDGKKWMTIGVTGPDSKAIAVVHYGGVPTDVVNSWAGDILRTQESSCTCIQGDCYWVMTDGPANRQAQYRIYKANQGRIVGQTDVSLDGGHIEECSCYPNDGKVECVCRDNWTGTNRPVLVISPDLSYRVGYLCAGLPSDTPRGEDAQFIGSCTSPMGNKEYGVKGFGFRQGTDVWMGRTISRTSRSGFEILRVKNGWTQTSKEQVRKQVVVDNLNWSGYSGSFTLPVELSGKDCLVPCFWVEMIRGKPEEKTIWTSSSSIVMCGVNYEVADWSWHDGAILPFDIDKM</sequence>
<feature type="chain" id="PRO_0000078696" description="Neuraminidase">
    <location>
        <begin position="1"/>
        <end position="470"/>
    </location>
</feature>
<feature type="topological domain" description="Intravirion" evidence="1">
    <location>
        <begin position="1"/>
        <end position="14"/>
    </location>
</feature>
<feature type="transmembrane region" description="Helical" evidence="1">
    <location>
        <begin position="15"/>
        <end position="35"/>
    </location>
</feature>
<feature type="topological domain" description="Virion surface" evidence="1">
    <location>
        <begin position="36"/>
        <end position="470"/>
    </location>
</feature>
<feature type="region of interest" description="Involved in apical transport and lipid raft association" evidence="1">
    <location>
        <begin position="11"/>
        <end position="32"/>
    </location>
</feature>
<feature type="region of interest" description="Hypervariable stalk region" evidence="1">
    <location>
        <begin position="32"/>
        <end position="86"/>
    </location>
</feature>
<feature type="region of interest" description="Head of neuraminidase" evidence="1">
    <location>
        <begin position="89"/>
        <end position="470"/>
    </location>
</feature>
<feature type="active site" description="Proton donor/acceptor" evidence="1">
    <location>
        <position position="149"/>
    </location>
</feature>
<feature type="active site" description="Nucleophile" evidence="1">
    <location>
        <position position="402"/>
    </location>
</feature>
<feature type="binding site" evidence="1">
    <location>
        <position position="116"/>
    </location>
    <ligand>
        <name>substrate</name>
    </ligand>
</feature>
<feature type="binding site" evidence="1">
    <location>
        <position position="150"/>
    </location>
    <ligand>
        <name>substrate</name>
    </ligand>
</feature>
<feature type="binding site" evidence="1">
    <location>
        <begin position="275"/>
        <end position="276"/>
    </location>
    <ligand>
        <name>substrate</name>
    </ligand>
</feature>
<feature type="binding site" evidence="1">
    <location>
        <position position="291"/>
    </location>
    <ligand>
        <name>substrate</name>
    </ligand>
</feature>
<feature type="binding site" evidence="1">
    <location>
        <position position="292"/>
    </location>
    <ligand>
        <name>Ca(2+)</name>
        <dbReference type="ChEBI" id="CHEBI:29108"/>
    </ligand>
</feature>
<feature type="binding site" evidence="1">
    <location>
        <position position="296"/>
    </location>
    <ligand>
        <name>Ca(2+)</name>
        <dbReference type="ChEBI" id="CHEBI:29108"/>
    </ligand>
</feature>
<feature type="binding site" evidence="1">
    <location>
        <position position="322"/>
    </location>
    <ligand>
        <name>Ca(2+)</name>
        <dbReference type="ChEBI" id="CHEBI:29108"/>
    </ligand>
</feature>
<feature type="binding site" evidence="1">
    <location>
        <position position="368"/>
    </location>
    <ligand>
        <name>substrate</name>
    </ligand>
</feature>
<feature type="glycosylation site" description="N-linked (GlcNAc...) asparagine; by host" evidence="1">
    <location>
        <position position="46"/>
    </location>
</feature>
<feature type="glycosylation site" description="N-linked (GlcNAc...) asparagine; by host" evidence="1">
    <location>
        <position position="54"/>
    </location>
</feature>
<feature type="glycosylation site" description="N-linked (GlcNAc...) asparagine; by host" evidence="1">
    <location>
        <position position="84"/>
    </location>
</feature>
<feature type="glycosylation site" description="N-linked (GlcNAc...) asparagine; by host" evidence="1">
    <location>
        <position position="144"/>
    </location>
</feature>
<feature type="glycosylation site" description="N-linked (GlcNAc...) asparagine; by host" evidence="1">
    <location>
        <position position="293"/>
    </location>
</feature>
<feature type="glycosylation site" description="N-linked (GlcNAc...) asparagine; by host" evidence="1">
    <location>
        <position position="398"/>
    </location>
</feature>
<feature type="disulfide bond" evidence="1">
    <location>
        <begin position="90"/>
        <end position="417"/>
    </location>
</feature>
<feature type="disulfide bond" evidence="1">
    <location>
        <begin position="122"/>
        <end position="127"/>
    </location>
</feature>
<feature type="disulfide bond" evidence="1">
    <location>
        <begin position="182"/>
        <end position="229"/>
    </location>
</feature>
<feature type="disulfide bond" evidence="1">
    <location>
        <begin position="231"/>
        <end position="236"/>
    </location>
</feature>
<feature type="disulfide bond" evidence="1">
    <location>
        <begin position="277"/>
        <end position="290"/>
    </location>
</feature>
<feature type="disulfide bond" evidence="1">
    <location>
        <begin position="279"/>
        <end position="288"/>
    </location>
</feature>
<feature type="disulfide bond" evidence="1">
    <location>
        <begin position="316"/>
        <end position="335"/>
    </location>
</feature>
<feature type="disulfide bond" evidence="1">
    <location>
        <begin position="421"/>
        <end position="446"/>
    </location>
</feature>